<reference key="1">
    <citation type="journal article" date="2001" name="Nature">
        <title>Genome sequence of enterohaemorrhagic Escherichia coli O157:H7.</title>
        <authorList>
            <person name="Perna N.T."/>
            <person name="Plunkett G. III"/>
            <person name="Burland V."/>
            <person name="Mau B."/>
            <person name="Glasner J.D."/>
            <person name="Rose D.J."/>
            <person name="Mayhew G.F."/>
            <person name="Evans P.S."/>
            <person name="Gregor J."/>
            <person name="Kirkpatrick H.A."/>
            <person name="Posfai G."/>
            <person name="Hackett J."/>
            <person name="Klink S."/>
            <person name="Boutin A."/>
            <person name="Shao Y."/>
            <person name="Miller L."/>
            <person name="Grotbeck E.J."/>
            <person name="Davis N.W."/>
            <person name="Lim A."/>
            <person name="Dimalanta E.T."/>
            <person name="Potamousis K."/>
            <person name="Apodaca J."/>
            <person name="Anantharaman T.S."/>
            <person name="Lin J."/>
            <person name="Yen G."/>
            <person name="Schwartz D.C."/>
            <person name="Welch R.A."/>
            <person name="Blattner F.R."/>
        </authorList>
    </citation>
    <scope>NUCLEOTIDE SEQUENCE [LARGE SCALE GENOMIC DNA]</scope>
    <source>
        <strain>O157:H7 / EDL933 / ATCC 700927 / EHEC</strain>
    </source>
</reference>
<reference key="2">
    <citation type="journal article" date="2001" name="DNA Res.">
        <title>Complete genome sequence of enterohemorrhagic Escherichia coli O157:H7 and genomic comparison with a laboratory strain K-12.</title>
        <authorList>
            <person name="Hayashi T."/>
            <person name="Makino K."/>
            <person name="Ohnishi M."/>
            <person name="Kurokawa K."/>
            <person name="Ishii K."/>
            <person name="Yokoyama K."/>
            <person name="Han C.-G."/>
            <person name="Ohtsubo E."/>
            <person name="Nakayama K."/>
            <person name="Murata T."/>
            <person name="Tanaka M."/>
            <person name="Tobe T."/>
            <person name="Iida T."/>
            <person name="Takami H."/>
            <person name="Honda T."/>
            <person name="Sasakawa C."/>
            <person name="Ogasawara N."/>
            <person name="Yasunaga T."/>
            <person name="Kuhara S."/>
            <person name="Shiba T."/>
            <person name="Hattori M."/>
            <person name="Shinagawa H."/>
        </authorList>
    </citation>
    <scope>NUCLEOTIDE SEQUENCE [LARGE SCALE GENOMIC DNA]</scope>
    <source>
        <strain>O157:H7 / Sakai / RIMD 0509952 / EHEC</strain>
    </source>
</reference>
<accession>Q8X8F9</accession>
<organism>
    <name type="scientific">Escherichia coli O157:H7</name>
    <dbReference type="NCBI Taxonomy" id="83334"/>
    <lineage>
        <taxon>Bacteria</taxon>
        <taxon>Pseudomonadati</taxon>
        <taxon>Pseudomonadota</taxon>
        <taxon>Gammaproteobacteria</taxon>
        <taxon>Enterobacterales</taxon>
        <taxon>Enterobacteriaceae</taxon>
        <taxon>Escherichia</taxon>
    </lineage>
</organism>
<keyword id="KW-0028">Amino-acid biosynthesis</keyword>
<keyword id="KW-0057">Aromatic amino acid biosynthesis</keyword>
<keyword id="KW-0521">NADP</keyword>
<keyword id="KW-0560">Oxidoreductase</keyword>
<keyword id="KW-1185">Reference proteome</keyword>
<evidence type="ECO:0000255" key="1">
    <source>
        <dbReference type="HAMAP-Rule" id="MF_00222"/>
    </source>
</evidence>
<dbReference type="EC" id="1.1.1.25" evidence="1"/>
<dbReference type="EMBL" id="AE005174">
    <property type="protein sequence ID" value="AAG58403.1"/>
    <property type="molecule type" value="Genomic_DNA"/>
</dbReference>
<dbReference type="EMBL" id="BA000007">
    <property type="protein sequence ID" value="BAB37570.1"/>
    <property type="molecule type" value="Genomic_DNA"/>
</dbReference>
<dbReference type="PIR" id="C91147">
    <property type="entry name" value="C91147"/>
</dbReference>
<dbReference type="PIR" id="G85992">
    <property type="entry name" value="G85992"/>
</dbReference>
<dbReference type="RefSeq" id="NP_312174.1">
    <property type="nucleotide sequence ID" value="NC_002695.1"/>
</dbReference>
<dbReference type="RefSeq" id="WP_000451254.1">
    <property type="nucleotide sequence ID" value="NZ_VOAI01000078.1"/>
</dbReference>
<dbReference type="SMR" id="Q8X8F9"/>
<dbReference type="STRING" id="155864.Z4652"/>
<dbReference type="GeneID" id="915998"/>
<dbReference type="KEGG" id="ece:Z4652"/>
<dbReference type="KEGG" id="ecs:ECs_4147"/>
<dbReference type="PATRIC" id="fig|386585.9.peg.4330"/>
<dbReference type="eggNOG" id="COG0169">
    <property type="taxonomic scope" value="Bacteria"/>
</dbReference>
<dbReference type="HOGENOM" id="CLU_044063_2_1_6"/>
<dbReference type="OMA" id="FGNPIKH"/>
<dbReference type="UniPathway" id="UPA00053">
    <property type="reaction ID" value="UER00087"/>
</dbReference>
<dbReference type="Proteomes" id="UP000000558">
    <property type="component" value="Chromosome"/>
</dbReference>
<dbReference type="Proteomes" id="UP000002519">
    <property type="component" value="Chromosome"/>
</dbReference>
<dbReference type="GO" id="GO:0005829">
    <property type="term" value="C:cytosol"/>
    <property type="evidence" value="ECO:0007669"/>
    <property type="project" value="TreeGrafter"/>
</dbReference>
<dbReference type="GO" id="GO:0050661">
    <property type="term" value="F:NADP binding"/>
    <property type="evidence" value="ECO:0007669"/>
    <property type="project" value="InterPro"/>
</dbReference>
<dbReference type="GO" id="GO:0004764">
    <property type="term" value="F:shikimate 3-dehydrogenase (NADP+) activity"/>
    <property type="evidence" value="ECO:0007669"/>
    <property type="project" value="UniProtKB-UniRule"/>
</dbReference>
<dbReference type="GO" id="GO:0008652">
    <property type="term" value="P:amino acid biosynthetic process"/>
    <property type="evidence" value="ECO:0007669"/>
    <property type="project" value="UniProtKB-KW"/>
</dbReference>
<dbReference type="GO" id="GO:0009073">
    <property type="term" value="P:aromatic amino acid family biosynthetic process"/>
    <property type="evidence" value="ECO:0007669"/>
    <property type="project" value="UniProtKB-KW"/>
</dbReference>
<dbReference type="GO" id="GO:0009423">
    <property type="term" value="P:chorismate biosynthetic process"/>
    <property type="evidence" value="ECO:0007669"/>
    <property type="project" value="UniProtKB-UniRule"/>
</dbReference>
<dbReference type="GO" id="GO:0019632">
    <property type="term" value="P:shikimate metabolic process"/>
    <property type="evidence" value="ECO:0007669"/>
    <property type="project" value="InterPro"/>
</dbReference>
<dbReference type="CDD" id="cd01065">
    <property type="entry name" value="NAD_bind_Shikimate_DH"/>
    <property type="match status" value="1"/>
</dbReference>
<dbReference type="FunFam" id="3.40.50.10860:FF:000006">
    <property type="entry name" value="Shikimate dehydrogenase (NADP(+))"/>
    <property type="match status" value="1"/>
</dbReference>
<dbReference type="FunFam" id="3.40.50.720:FF:000104">
    <property type="entry name" value="Shikimate dehydrogenase (NADP(+))"/>
    <property type="match status" value="1"/>
</dbReference>
<dbReference type="Gene3D" id="3.40.50.10860">
    <property type="entry name" value="Leucine Dehydrogenase, chain A, domain 1"/>
    <property type="match status" value="1"/>
</dbReference>
<dbReference type="Gene3D" id="3.40.50.720">
    <property type="entry name" value="NAD(P)-binding Rossmann-like Domain"/>
    <property type="match status" value="1"/>
</dbReference>
<dbReference type="HAMAP" id="MF_00222">
    <property type="entry name" value="Shikimate_DH_AroE"/>
    <property type="match status" value="1"/>
</dbReference>
<dbReference type="InterPro" id="IPR046346">
    <property type="entry name" value="Aminoacid_DH-like_N_sf"/>
</dbReference>
<dbReference type="InterPro" id="IPR036291">
    <property type="entry name" value="NAD(P)-bd_dom_sf"/>
</dbReference>
<dbReference type="InterPro" id="IPR041121">
    <property type="entry name" value="SDH_C"/>
</dbReference>
<dbReference type="InterPro" id="IPR011342">
    <property type="entry name" value="Shikimate_DH"/>
</dbReference>
<dbReference type="InterPro" id="IPR013708">
    <property type="entry name" value="Shikimate_DH-bd_N"/>
</dbReference>
<dbReference type="InterPro" id="IPR022893">
    <property type="entry name" value="Shikimate_DH_fam"/>
</dbReference>
<dbReference type="InterPro" id="IPR006151">
    <property type="entry name" value="Shikm_DH/Glu-tRNA_Rdtase"/>
</dbReference>
<dbReference type="NCBIfam" id="TIGR00507">
    <property type="entry name" value="aroE"/>
    <property type="match status" value="1"/>
</dbReference>
<dbReference type="NCBIfam" id="NF001310">
    <property type="entry name" value="PRK00258.1-2"/>
    <property type="match status" value="1"/>
</dbReference>
<dbReference type="PANTHER" id="PTHR21089:SF1">
    <property type="entry name" value="BIFUNCTIONAL 3-DEHYDROQUINATE DEHYDRATASE_SHIKIMATE DEHYDROGENASE, CHLOROPLASTIC"/>
    <property type="match status" value="1"/>
</dbReference>
<dbReference type="PANTHER" id="PTHR21089">
    <property type="entry name" value="SHIKIMATE DEHYDROGENASE"/>
    <property type="match status" value="1"/>
</dbReference>
<dbReference type="Pfam" id="PF18317">
    <property type="entry name" value="SDH_C"/>
    <property type="match status" value="1"/>
</dbReference>
<dbReference type="Pfam" id="PF01488">
    <property type="entry name" value="Shikimate_DH"/>
    <property type="match status" value="1"/>
</dbReference>
<dbReference type="Pfam" id="PF08501">
    <property type="entry name" value="Shikimate_dh_N"/>
    <property type="match status" value="1"/>
</dbReference>
<dbReference type="SUPFAM" id="SSF53223">
    <property type="entry name" value="Aminoacid dehydrogenase-like, N-terminal domain"/>
    <property type="match status" value="1"/>
</dbReference>
<dbReference type="SUPFAM" id="SSF51735">
    <property type="entry name" value="NAD(P)-binding Rossmann-fold domains"/>
    <property type="match status" value="1"/>
</dbReference>
<sequence>METYAVFGNPIAHSKSPFIHQQFAQQLNIEHPYGRVLAPINDFVNTLNAFFSAGGKGANVTVPFKEEAFARADELTERAALAGAVNTLKRLEDGRLLGDNTDGVGLLSDLERLSFIRPGLRILLIGAGGASRGVLLPLLSLDCAVTITNRTVSRAEELAKLFAHTGSIQALGMDELEGHEFDLIINATSSGISGDIPAIPSSLIHPGIYCYDMFYQKGKTPFLAWCEQRGSKPTADGLGMLVAQAAHAFLLWHGVLPDVEPVIKQLQEELSA</sequence>
<comment type="function">
    <text evidence="1">Involved in the biosynthesis of the chorismate, which leads to the biosynthesis of aromatic amino acids. Catalyzes the reversible NADPH linked reduction of 3-dehydroshikimate (DHSA) to yield shikimate (SA).</text>
</comment>
<comment type="catalytic activity">
    <reaction evidence="1">
        <text>shikimate + NADP(+) = 3-dehydroshikimate + NADPH + H(+)</text>
        <dbReference type="Rhea" id="RHEA:17737"/>
        <dbReference type="ChEBI" id="CHEBI:15378"/>
        <dbReference type="ChEBI" id="CHEBI:16630"/>
        <dbReference type="ChEBI" id="CHEBI:36208"/>
        <dbReference type="ChEBI" id="CHEBI:57783"/>
        <dbReference type="ChEBI" id="CHEBI:58349"/>
        <dbReference type="EC" id="1.1.1.25"/>
    </reaction>
</comment>
<comment type="pathway">
    <text evidence="1">Metabolic intermediate biosynthesis; chorismate biosynthesis; chorismate from D-erythrose 4-phosphate and phosphoenolpyruvate: step 4/7.</text>
</comment>
<comment type="subunit">
    <text evidence="1">Homodimer.</text>
</comment>
<comment type="similarity">
    <text evidence="1">Belongs to the shikimate dehydrogenase family.</text>
</comment>
<protein>
    <recommendedName>
        <fullName evidence="1">Shikimate dehydrogenase (NADP(+))</fullName>
        <shortName evidence="1">SDH</shortName>
        <ecNumber evidence="1">1.1.1.25</ecNumber>
    </recommendedName>
</protein>
<proteinExistence type="inferred from homology"/>
<feature type="chain" id="PRO_0000136004" description="Shikimate dehydrogenase (NADP(+))">
    <location>
        <begin position="1"/>
        <end position="272"/>
    </location>
</feature>
<feature type="active site" description="Proton acceptor" evidence="1">
    <location>
        <position position="65"/>
    </location>
</feature>
<feature type="binding site" evidence="1">
    <location>
        <begin position="14"/>
        <end position="16"/>
    </location>
    <ligand>
        <name>shikimate</name>
        <dbReference type="ChEBI" id="CHEBI:36208"/>
    </ligand>
</feature>
<feature type="binding site" evidence="1">
    <location>
        <position position="61"/>
    </location>
    <ligand>
        <name>shikimate</name>
        <dbReference type="ChEBI" id="CHEBI:36208"/>
    </ligand>
</feature>
<feature type="binding site" evidence="1">
    <location>
        <position position="77"/>
    </location>
    <ligand>
        <name>NADP(+)</name>
        <dbReference type="ChEBI" id="CHEBI:58349"/>
    </ligand>
</feature>
<feature type="binding site" evidence="1">
    <location>
        <position position="86"/>
    </location>
    <ligand>
        <name>shikimate</name>
        <dbReference type="ChEBI" id="CHEBI:36208"/>
    </ligand>
</feature>
<feature type="binding site" evidence="1">
    <location>
        <position position="102"/>
    </location>
    <ligand>
        <name>shikimate</name>
        <dbReference type="ChEBI" id="CHEBI:36208"/>
    </ligand>
</feature>
<feature type="binding site" evidence="1">
    <location>
        <begin position="126"/>
        <end position="130"/>
    </location>
    <ligand>
        <name>NADP(+)</name>
        <dbReference type="ChEBI" id="CHEBI:58349"/>
    </ligand>
</feature>
<feature type="binding site" evidence="1">
    <location>
        <begin position="149"/>
        <end position="154"/>
    </location>
    <ligand>
        <name>NADP(+)</name>
        <dbReference type="ChEBI" id="CHEBI:58349"/>
    </ligand>
</feature>
<feature type="binding site" evidence="1">
    <location>
        <position position="213"/>
    </location>
    <ligand>
        <name>NADP(+)</name>
        <dbReference type="ChEBI" id="CHEBI:58349"/>
    </ligand>
</feature>
<feature type="binding site" evidence="1">
    <location>
        <position position="215"/>
    </location>
    <ligand>
        <name>shikimate</name>
        <dbReference type="ChEBI" id="CHEBI:36208"/>
    </ligand>
</feature>
<feature type="binding site" evidence="1">
    <location>
        <position position="237"/>
    </location>
    <ligand>
        <name>NADP(+)</name>
        <dbReference type="ChEBI" id="CHEBI:58349"/>
    </ligand>
</feature>
<name>AROE_ECO57</name>
<gene>
    <name evidence="1" type="primary">aroE</name>
    <name type="ordered locus">Z4652</name>
    <name type="ordered locus">ECs4147</name>
</gene>